<comment type="similarity">
    <text evidence="1">Belongs to the chlamydial CPn_0803/CT_584/TC_0873 family.</text>
</comment>
<name>Y803_CHLPN</name>
<evidence type="ECO:0000305" key="1"/>
<evidence type="ECO:0007829" key="2">
    <source>
        <dbReference type="PDB" id="3Q9D"/>
    </source>
</evidence>
<protein>
    <recommendedName>
        <fullName>Protein CPn_0803/CP_1068/CPj0803/CpB0832</fullName>
    </recommendedName>
</protein>
<organism>
    <name type="scientific">Chlamydia pneumoniae</name>
    <name type="common">Chlamydophila pneumoniae</name>
    <dbReference type="NCBI Taxonomy" id="83558"/>
    <lineage>
        <taxon>Bacteria</taxon>
        <taxon>Pseudomonadati</taxon>
        <taxon>Chlamydiota</taxon>
        <taxon>Chlamydiia</taxon>
        <taxon>Chlamydiales</taxon>
        <taxon>Chlamydiaceae</taxon>
        <taxon>Chlamydia/Chlamydophila group</taxon>
        <taxon>Chlamydia</taxon>
    </lineage>
</organism>
<reference key="1">
    <citation type="journal article" date="1999" name="Nat. Genet.">
        <title>Comparative genomes of Chlamydia pneumoniae and C. trachomatis.</title>
        <authorList>
            <person name="Kalman S."/>
            <person name="Mitchell W.P."/>
            <person name="Marathe R."/>
            <person name="Lammel C.J."/>
            <person name="Fan J."/>
            <person name="Hyman R.W."/>
            <person name="Olinger L."/>
            <person name="Grimwood J."/>
            <person name="Davis R.W."/>
            <person name="Stephens R.S."/>
        </authorList>
    </citation>
    <scope>NUCLEOTIDE SEQUENCE [LARGE SCALE GENOMIC DNA]</scope>
    <source>
        <strain>CWL029</strain>
    </source>
</reference>
<reference key="2">
    <citation type="journal article" date="2000" name="Nucleic Acids Res.">
        <title>Genome sequences of Chlamydia trachomatis MoPn and Chlamydia pneumoniae AR39.</title>
        <authorList>
            <person name="Read T.D."/>
            <person name="Brunham R.C."/>
            <person name="Shen C."/>
            <person name="Gill S.R."/>
            <person name="Heidelberg J.F."/>
            <person name="White O."/>
            <person name="Hickey E.K."/>
            <person name="Peterson J.D."/>
            <person name="Utterback T.R."/>
            <person name="Berry K.J."/>
            <person name="Bass S."/>
            <person name="Linher K.D."/>
            <person name="Weidman J.F."/>
            <person name="Khouri H.M."/>
            <person name="Craven B."/>
            <person name="Bowman C."/>
            <person name="Dodson R.J."/>
            <person name="Gwinn M.L."/>
            <person name="Nelson W.C."/>
            <person name="DeBoy R.T."/>
            <person name="Kolonay J.F."/>
            <person name="McClarty G."/>
            <person name="Salzberg S.L."/>
            <person name="Eisen J.A."/>
            <person name="Fraser C.M."/>
        </authorList>
    </citation>
    <scope>NUCLEOTIDE SEQUENCE [LARGE SCALE GENOMIC DNA]</scope>
    <source>
        <strain>AR39</strain>
    </source>
</reference>
<reference key="3">
    <citation type="journal article" date="2000" name="Nucleic Acids Res.">
        <title>Comparison of whole genome sequences of Chlamydia pneumoniae J138 from Japan and CWL029 from USA.</title>
        <authorList>
            <person name="Shirai M."/>
            <person name="Hirakawa H."/>
            <person name="Kimoto M."/>
            <person name="Tabuchi M."/>
            <person name="Kishi F."/>
            <person name="Ouchi K."/>
            <person name="Shiba T."/>
            <person name="Ishii K."/>
            <person name="Hattori M."/>
            <person name="Kuhara S."/>
            <person name="Nakazawa T."/>
        </authorList>
    </citation>
    <scope>NUCLEOTIDE SEQUENCE [LARGE SCALE GENOMIC DNA]</scope>
    <source>
        <strain>J138</strain>
    </source>
</reference>
<reference key="4">
    <citation type="submission" date="2002-05" db="EMBL/GenBank/DDBJ databases">
        <title>The genome sequence of Chlamydia pneumoniae TW183 and comparison with other Chlamydia strains based on whole genome sequence analysis.</title>
        <authorList>
            <person name="Geng M.M."/>
            <person name="Schuhmacher A."/>
            <person name="Muehldorfer I."/>
            <person name="Bensch K.W."/>
            <person name="Schaefer K.P."/>
            <person name="Schneider S."/>
            <person name="Pohl T."/>
            <person name="Essig A."/>
            <person name="Marre R."/>
            <person name="Melchers K."/>
        </authorList>
    </citation>
    <scope>NUCLEOTIDE SEQUENCE [LARGE SCALE GENOMIC DNA]</scope>
    <source>
        <strain>TW-183</strain>
    </source>
</reference>
<dbReference type="EMBL" id="AE001363">
    <property type="protein sequence ID" value="AAD18941.1"/>
    <property type="molecule type" value="Genomic_DNA"/>
</dbReference>
<dbReference type="EMBL" id="AE002161">
    <property type="protein sequence ID" value="AAF38840.1"/>
    <property type="molecule type" value="Genomic_DNA"/>
</dbReference>
<dbReference type="EMBL" id="BA000008">
    <property type="protein sequence ID" value="BAA99011.1"/>
    <property type="molecule type" value="Genomic_DNA"/>
</dbReference>
<dbReference type="EMBL" id="AE009440">
    <property type="protein sequence ID" value="AAP98761.1"/>
    <property type="molecule type" value="Genomic_DNA"/>
</dbReference>
<dbReference type="PIR" id="A86591">
    <property type="entry name" value="A86591"/>
</dbReference>
<dbReference type="PIR" id="D72034">
    <property type="entry name" value="D72034"/>
</dbReference>
<dbReference type="RefSeq" id="NP_224998.1">
    <property type="nucleotide sequence ID" value="NC_000922.1"/>
</dbReference>
<dbReference type="RefSeq" id="WP_010883440.1">
    <property type="nucleotide sequence ID" value="NZ_LN847257.1"/>
</dbReference>
<dbReference type="PDB" id="3Q9D">
    <property type="method" value="X-ray"/>
    <property type="resolution" value="2.00 A"/>
    <property type="chains" value="A/B=1-184"/>
</dbReference>
<dbReference type="PDBsum" id="3Q9D"/>
<dbReference type="SMR" id="Q9Z7A3"/>
<dbReference type="STRING" id="406984.CPK_ORF00211"/>
<dbReference type="GeneID" id="45050858"/>
<dbReference type="KEGG" id="cpa:CP_1068"/>
<dbReference type="KEGG" id="cpj:CPj0803"/>
<dbReference type="KEGG" id="cpn:CPn_0803"/>
<dbReference type="KEGG" id="cpt:CpB0832"/>
<dbReference type="PATRIC" id="fig|115713.3.peg.882"/>
<dbReference type="HOGENOM" id="CLU_1472715_0_0_0"/>
<dbReference type="OMA" id="LITEFMM"/>
<dbReference type="OrthoDB" id="18350at2"/>
<dbReference type="EvolutionaryTrace" id="Q9Z7A3"/>
<dbReference type="Proteomes" id="UP000000583">
    <property type="component" value="Chromosome"/>
</dbReference>
<dbReference type="Proteomes" id="UP000000801">
    <property type="component" value="Chromosome"/>
</dbReference>
<dbReference type="Gene3D" id="1.20.58.1050">
    <property type="match status" value="1"/>
</dbReference>
<dbReference type="Gene3D" id="6.10.250.1130">
    <property type="match status" value="1"/>
</dbReference>
<dbReference type="InterPro" id="IPR035397">
    <property type="entry name" value="CT_584-like"/>
</dbReference>
<dbReference type="Pfam" id="PF17435">
    <property type="entry name" value="CT_584-like"/>
    <property type="match status" value="1"/>
</dbReference>
<gene>
    <name type="ordered locus">CPn_0803</name>
    <name type="ordered locus">CP_1068</name>
    <name type="ordered locus">CPj0803</name>
    <name type="ordered locus">CpB0832</name>
</gene>
<sequence length="184" mass="21270">MAAKTKTLELEDNVFLLLEGNLKRIFATPIGYTTFREFQNVVFNCANGQQEIANFFFEMLINGKLTQELAPQQKQAAHSLIAEFMMPIRVAKDIHERGEFINFITSDMLTQQERCIFLNRLARVDGQEFLLMTDVQNTCHLIRHLLARLLEAQKNPVGEKNLQEIQEEITSLKNHFDELTKALQ</sequence>
<feature type="chain" id="PRO_0000218428" description="Protein CPn_0803/CP_1068/CPj0803/CpB0832">
    <location>
        <begin position="1"/>
        <end position="184"/>
    </location>
</feature>
<feature type="helix" evidence="2">
    <location>
        <begin position="12"/>
        <end position="25"/>
    </location>
</feature>
<feature type="helix" evidence="2">
    <location>
        <begin position="34"/>
        <end position="46"/>
    </location>
</feature>
<feature type="helix" evidence="2">
    <location>
        <begin position="50"/>
        <end position="62"/>
    </location>
</feature>
<feature type="helix" evidence="2">
    <location>
        <begin position="71"/>
        <end position="97"/>
    </location>
</feature>
<feature type="strand" evidence="2">
    <location>
        <begin position="100"/>
        <end position="111"/>
    </location>
</feature>
<feature type="strand" evidence="2">
    <location>
        <begin position="114"/>
        <end position="123"/>
    </location>
</feature>
<feature type="strand" evidence="2">
    <location>
        <begin position="128"/>
        <end position="134"/>
    </location>
</feature>
<feature type="helix" evidence="2">
    <location>
        <begin position="135"/>
        <end position="154"/>
    </location>
</feature>
<feature type="helix" evidence="2">
    <location>
        <begin position="156"/>
        <end position="164"/>
    </location>
</feature>
<feature type="helix" evidence="2">
    <location>
        <begin position="166"/>
        <end position="181"/>
    </location>
</feature>
<proteinExistence type="evidence at protein level"/>
<accession>Q9Z7A3</accession>
<keyword id="KW-0002">3D-structure</keyword>